<gene>
    <name type="primary">Phkg2</name>
</gene>
<protein>
    <recommendedName>
        <fullName>Phosphorylase b kinase gamma catalytic chain, liver/testis isoform</fullName>
        <shortName>PHK-gamma-LT</shortName>
        <shortName>PHK-gamma-T</shortName>
        <ecNumber evidence="3">2.7.11.19</ecNumber>
    </recommendedName>
    <alternativeName>
        <fullName>Phosphorylase kinase subunit gamma-2</fullName>
    </alternativeName>
</protein>
<evidence type="ECO:0000250" key="1"/>
<evidence type="ECO:0000250" key="2">
    <source>
        <dbReference type="UniProtKB" id="P15735"/>
    </source>
</evidence>
<evidence type="ECO:0000250" key="3">
    <source>
        <dbReference type="UniProtKB" id="P31325"/>
    </source>
</evidence>
<evidence type="ECO:0000255" key="4">
    <source>
        <dbReference type="PROSITE-ProRule" id="PRU00159"/>
    </source>
</evidence>
<evidence type="ECO:0000255" key="5">
    <source>
        <dbReference type="PROSITE-ProRule" id="PRU10027"/>
    </source>
</evidence>
<evidence type="ECO:0000305" key="6"/>
<dbReference type="EC" id="2.7.11.19" evidence="3"/>
<dbReference type="EMBL" id="AK005277">
    <property type="protein sequence ID" value="BAB23926.1"/>
    <property type="molecule type" value="mRNA"/>
</dbReference>
<dbReference type="EMBL" id="CH466531">
    <property type="protein sequence ID" value="EDL17548.1"/>
    <property type="molecule type" value="Genomic_DNA"/>
</dbReference>
<dbReference type="EMBL" id="CH466531">
    <property type="protein sequence ID" value="EDL17549.1"/>
    <property type="molecule type" value="Genomic_DNA"/>
</dbReference>
<dbReference type="EMBL" id="BC138913">
    <property type="protein sequence ID" value="AAI38914.1"/>
    <property type="molecule type" value="mRNA"/>
</dbReference>
<dbReference type="EMBL" id="BC145734">
    <property type="protein sequence ID" value="AAI45735.1"/>
    <property type="molecule type" value="mRNA"/>
</dbReference>
<dbReference type="CCDS" id="CCDS21869.1"/>
<dbReference type="RefSeq" id="NP_081164.2">
    <property type="nucleotide sequence ID" value="NM_026888.3"/>
</dbReference>
<dbReference type="RefSeq" id="XP_006508230.1">
    <property type="nucleotide sequence ID" value="XM_006508167.4"/>
</dbReference>
<dbReference type="RefSeq" id="XP_011240193.1">
    <property type="nucleotide sequence ID" value="XM_011241891.1"/>
</dbReference>
<dbReference type="RefSeq" id="XP_036009301.1">
    <property type="nucleotide sequence ID" value="XM_036153408.1"/>
</dbReference>
<dbReference type="SMR" id="Q9DB30"/>
<dbReference type="BioGRID" id="213142">
    <property type="interactions" value="2"/>
</dbReference>
<dbReference type="FunCoup" id="Q9DB30">
    <property type="interactions" value="2825"/>
</dbReference>
<dbReference type="STRING" id="10090.ENSMUSP00000113533"/>
<dbReference type="iPTMnet" id="Q9DB30"/>
<dbReference type="PhosphoSitePlus" id="Q9DB30"/>
<dbReference type="jPOST" id="Q9DB30"/>
<dbReference type="PaxDb" id="10090-ENSMUSP00000033086"/>
<dbReference type="PeptideAtlas" id="Q9DB30"/>
<dbReference type="ProteomicsDB" id="287709"/>
<dbReference type="Antibodypedia" id="13792">
    <property type="antibodies" value="408 antibodies from 31 providers"/>
</dbReference>
<dbReference type="DNASU" id="68961"/>
<dbReference type="Ensembl" id="ENSMUST00000033086.8">
    <property type="protein sequence ID" value="ENSMUSP00000033086.2"/>
    <property type="gene ID" value="ENSMUSG00000030815.12"/>
</dbReference>
<dbReference type="Ensembl" id="ENSMUST00000121004.3">
    <property type="protein sequence ID" value="ENSMUSP00000113533.2"/>
    <property type="gene ID" value="ENSMUSG00000030815.12"/>
</dbReference>
<dbReference type="GeneID" id="68961"/>
<dbReference type="KEGG" id="mmu:68961"/>
<dbReference type="UCSC" id="uc009jwc.2">
    <property type="organism name" value="mouse"/>
</dbReference>
<dbReference type="AGR" id="MGI:1916211"/>
<dbReference type="CTD" id="5261"/>
<dbReference type="MGI" id="MGI:1916211">
    <property type="gene designation" value="Phkg2"/>
</dbReference>
<dbReference type="VEuPathDB" id="HostDB:ENSMUSG00000030815"/>
<dbReference type="eggNOG" id="KOG0599">
    <property type="taxonomic scope" value="Eukaryota"/>
</dbReference>
<dbReference type="GeneTree" id="ENSGT00940000160435"/>
<dbReference type="HOGENOM" id="CLU_000288_63_0_1"/>
<dbReference type="InParanoid" id="Q9DB30"/>
<dbReference type="OMA" id="FPVMGPE"/>
<dbReference type="OrthoDB" id="419455at2759"/>
<dbReference type="PhylomeDB" id="Q9DB30"/>
<dbReference type="TreeFam" id="TF320349"/>
<dbReference type="BRENDA" id="2.7.11.19">
    <property type="organism ID" value="3474"/>
</dbReference>
<dbReference type="Reactome" id="R-MMU-70221">
    <property type="pathway name" value="Glycogen breakdown (glycogenolysis)"/>
</dbReference>
<dbReference type="BioGRID-ORCS" id="68961">
    <property type="hits" value="2 hits in 79 CRISPR screens"/>
</dbReference>
<dbReference type="PRO" id="PR:Q9DB30"/>
<dbReference type="Proteomes" id="UP000000589">
    <property type="component" value="Chromosome 7"/>
</dbReference>
<dbReference type="RNAct" id="Q9DB30">
    <property type="molecule type" value="protein"/>
</dbReference>
<dbReference type="Bgee" id="ENSMUSG00000030815">
    <property type="expression patterns" value="Expressed in seminiferous tubule of testis and 256 other cell types or tissues"/>
</dbReference>
<dbReference type="ExpressionAtlas" id="Q9DB30">
    <property type="expression patterns" value="baseline and differential"/>
</dbReference>
<dbReference type="GO" id="GO:0005829">
    <property type="term" value="C:cytosol"/>
    <property type="evidence" value="ECO:0007669"/>
    <property type="project" value="Ensembl"/>
</dbReference>
<dbReference type="GO" id="GO:0005964">
    <property type="term" value="C:phosphorylase kinase complex"/>
    <property type="evidence" value="ECO:0007669"/>
    <property type="project" value="Ensembl"/>
</dbReference>
<dbReference type="GO" id="GO:0005524">
    <property type="term" value="F:ATP binding"/>
    <property type="evidence" value="ECO:0007669"/>
    <property type="project" value="UniProtKB-KW"/>
</dbReference>
<dbReference type="GO" id="GO:0005516">
    <property type="term" value="F:calmodulin binding"/>
    <property type="evidence" value="ECO:0007669"/>
    <property type="project" value="UniProtKB-KW"/>
</dbReference>
<dbReference type="GO" id="GO:0019899">
    <property type="term" value="F:enzyme binding"/>
    <property type="evidence" value="ECO:0007669"/>
    <property type="project" value="Ensembl"/>
</dbReference>
<dbReference type="GO" id="GO:0004689">
    <property type="term" value="F:phosphorylase kinase activity"/>
    <property type="evidence" value="ECO:0000315"/>
    <property type="project" value="MGI"/>
</dbReference>
<dbReference type="GO" id="GO:0005980">
    <property type="term" value="P:glycogen catabolic process"/>
    <property type="evidence" value="ECO:0000315"/>
    <property type="project" value="MGI"/>
</dbReference>
<dbReference type="GO" id="GO:0045819">
    <property type="term" value="P:positive regulation of glycogen catabolic process"/>
    <property type="evidence" value="ECO:0000315"/>
    <property type="project" value="MGI"/>
</dbReference>
<dbReference type="FunFam" id="3.30.200.20:FF:000138">
    <property type="entry name" value="Phosphorylase b kinase gamma catalytic chain, liver/testis"/>
    <property type="match status" value="1"/>
</dbReference>
<dbReference type="FunFam" id="1.10.510.10:FF:000149">
    <property type="entry name" value="phosphorylase b kinase gamma catalytic chain, liver/testis isoform"/>
    <property type="match status" value="1"/>
</dbReference>
<dbReference type="Gene3D" id="3.30.200.20">
    <property type="entry name" value="Phosphorylase Kinase, domain 1"/>
    <property type="match status" value="1"/>
</dbReference>
<dbReference type="Gene3D" id="1.10.510.10">
    <property type="entry name" value="Transferase(Phosphotransferase) domain 1"/>
    <property type="match status" value="1"/>
</dbReference>
<dbReference type="InterPro" id="IPR011009">
    <property type="entry name" value="Kinase-like_dom_sf"/>
</dbReference>
<dbReference type="InterPro" id="IPR002291">
    <property type="entry name" value="Phosph_kin_gamma"/>
</dbReference>
<dbReference type="InterPro" id="IPR000719">
    <property type="entry name" value="Prot_kinase_dom"/>
</dbReference>
<dbReference type="InterPro" id="IPR017441">
    <property type="entry name" value="Protein_kinase_ATP_BS"/>
</dbReference>
<dbReference type="InterPro" id="IPR008271">
    <property type="entry name" value="Ser/Thr_kinase_AS"/>
</dbReference>
<dbReference type="PANTHER" id="PTHR24347">
    <property type="entry name" value="SERINE/THREONINE-PROTEIN KINASE"/>
    <property type="match status" value="1"/>
</dbReference>
<dbReference type="Pfam" id="PF00069">
    <property type="entry name" value="Pkinase"/>
    <property type="match status" value="1"/>
</dbReference>
<dbReference type="PRINTS" id="PR01049">
    <property type="entry name" value="PHOSPHBKNASE"/>
</dbReference>
<dbReference type="SMART" id="SM00220">
    <property type="entry name" value="S_TKc"/>
    <property type="match status" value="1"/>
</dbReference>
<dbReference type="SUPFAM" id="SSF56112">
    <property type="entry name" value="Protein kinase-like (PK-like)"/>
    <property type="match status" value="1"/>
</dbReference>
<dbReference type="PROSITE" id="PS00107">
    <property type="entry name" value="PROTEIN_KINASE_ATP"/>
    <property type="match status" value="1"/>
</dbReference>
<dbReference type="PROSITE" id="PS50011">
    <property type="entry name" value="PROTEIN_KINASE_DOM"/>
    <property type="match status" value="1"/>
</dbReference>
<dbReference type="PROSITE" id="PS00108">
    <property type="entry name" value="PROTEIN_KINASE_ST"/>
    <property type="match status" value="1"/>
</dbReference>
<proteinExistence type="evidence at transcript level"/>
<name>PHKG2_MOUSE</name>
<sequence>MTLDVGPEDELPDWAAAKEFYQKYDPKDIIGRGVSSVVRRCVHRATGDEFAVKIMEVSAERLSLEQLEEVRDATRREMHILRQVAGHPHIITLIDSYESSSFMFLVFDLMRKGELFDYLTEKVALSEKETRSIMRSLLEAVSFLHANNIVHRDLKPENILLDDNMQIRLSDFGFSCHLEAGEKLRELCGTPGYLAPEILKCSMDETHPGYGKEVDLWACGVILFTLLAGSPPFWHRRQILMLRMIMEGQYQFTSPEWDDRSNTVKDLISKLLQVDPEARLTAEQALQHPFFERCEGSQPWNLTPRQRFRVAVWTILAAGRVALSSHRLRPLTKNALLRDPYALRPVRRLIDNCAFRLYGHWVKKGEQQNRAALFQHQPPRLFPIAATELEGDSGAITEDEATLVRS</sequence>
<reference key="1">
    <citation type="journal article" date="2005" name="Science">
        <title>The transcriptional landscape of the mammalian genome.</title>
        <authorList>
            <person name="Carninci P."/>
            <person name="Kasukawa T."/>
            <person name="Katayama S."/>
            <person name="Gough J."/>
            <person name="Frith M.C."/>
            <person name="Maeda N."/>
            <person name="Oyama R."/>
            <person name="Ravasi T."/>
            <person name="Lenhard B."/>
            <person name="Wells C."/>
            <person name="Kodzius R."/>
            <person name="Shimokawa K."/>
            <person name="Bajic V.B."/>
            <person name="Brenner S.E."/>
            <person name="Batalov S."/>
            <person name="Forrest A.R."/>
            <person name="Zavolan M."/>
            <person name="Davis M.J."/>
            <person name="Wilming L.G."/>
            <person name="Aidinis V."/>
            <person name="Allen J.E."/>
            <person name="Ambesi-Impiombato A."/>
            <person name="Apweiler R."/>
            <person name="Aturaliya R.N."/>
            <person name="Bailey T.L."/>
            <person name="Bansal M."/>
            <person name="Baxter L."/>
            <person name="Beisel K.W."/>
            <person name="Bersano T."/>
            <person name="Bono H."/>
            <person name="Chalk A.M."/>
            <person name="Chiu K.P."/>
            <person name="Choudhary V."/>
            <person name="Christoffels A."/>
            <person name="Clutterbuck D.R."/>
            <person name="Crowe M.L."/>
            <person name="Dalla E."/>
            <person name="Dalrymple B.P."/>
            <person name="de Bono B."/>
            <person name="Della Gatta G."/>
            <person name="di Bernardo D."/>
            <person name="Down T."/>
            <person name="Engstrom P."/>
            <person name="Fagiolini M."/>
            <person name="Faulkner G."/>
            <person name="Fletcher C.F."/>
            <person name="Fukushima T."/>
            <person name="Furuno M."/>
            <person name="Futaki S."/>
            <person name="Gariboldi M."/>
            <person name="Georgii-Hemming P."/>
            <person name="Gingeras T.R."/>
            <person name="Gojobori T."/>
            <person name="Green R.E."/>
            <person name="Gustincich S."/>
            <person name="Harbers M."/>
            <person name="Hayashi Y."/>
            <person name="Hensch T.K."/>
            <person name="Hirokawa N."/>
            <person name="Hill D."/>
            <person name="Huminiecki L."/>
            <person name="Iacono M."/>
            <person name="Ikeo K."/>
            <person name="Iwama A."/>
            <person name="Ishikawa T."/>
            <person name="Jakt M."/>
            <person name="Kanapin A."/>
            <person name="Katoh M."/>
            <person name="Kawasawa Y."/>
            <person name="Kelso J."/>
            <person name="Kitamura H."/>
            <person name="Kitano H."/>
            <person name="Kollias G."/>
            <person name="Krishnan S.P."/>
            <person name="Kruger A."/>
            <person name="Kummerfeld S.K."/>
            <person name="Kurochkin I.V."/>
            <person name="Lareau L.F."/>
            <person name="Lazarevic D."/>
            <person name="Lipovich L."/>
            <person name="Liu J."/>
            <person name="Liuni S."/>
            <person name="McWilliam S."/>
            <person name="Madan Babu M."/>
            <person name="Madera M."/>
            <person name="Marchionni L."/>
            <person name="Matsuda H."/>
            <person name="Matsuzawa S."/>
            <person name="Miki H."/>
            <person name="Mignone F."/>
            <person name="Miyake S."/>
            <person name="Morris K."/>
            <person name="Mottagui-Tabar S."/>
            <person name="Mulder N."/>
            <person name="Nakano N."/>
            <person name="Nakauchi H."/>
            <person name="Ng P."/>
            <person name="Nilsson R."/>
            <person name="Nishiguchi S."/>
            <person name="Nishikawa S."/>
            <person name="Nori F."/>
            <person name="Ohara O."/>
            <person name="Okazaki Y."/>
            <person name="Orlando V."/>
            <person name="Pang K.C."/>
            <person name="Pavan W.J."/>
            <person name="Pavesi G."/>
            <person name="Pesole G."/>
            <person name="Petrovsky N."/>
            <person name="Piazza S."/>
            <person name="Reed J."/>
            <person name="Reid J.F."/>
            <person name="Ring B.Z."/>
            <person name="Ringwald M."/>
            <person name="Rost B."/>
            <person name="Ruan Y."/>
            <person name="Salzberg S.L."/>
            <person name="Sandelin A."/>
            <person name="Schneider C."/>
            <person name="Schoenbach C."/>
            <person name="Sekiguchi K."/>
            <person name="Semple C.A."/>
            <person name="Seno S."/>
            <person name="Sessa L."/>
            <person name="Sheng Y."/>
            <person name="Shibata Y."/>
            <person name="Shimada H."/>
            <person name="Shimada K."/>
            <person name="Silva D."/>
            <person name="Sinclair B."/>
            <person name="Sperling S."/>
            <person name="Stupka E."/>
            <person name="Sugiura K."/>
            <person name="Sultana R."/>
            <person name="Takenaka Y."/>
            <person name="Taki K."/>
            <person name="Tammoja K."/>
            <person name="Tan S.L."/>
            <person name="Tang S."/>
            <person name="Taylor M.S."/>
            <person name="Tegner J."/>
            <person name="Teichmann S.A."/>
            <person name="Ueda H.R."/>
            <person name="van Nimwegen E."/>
            <person name="Verardo R."/>
            <person name="Wei C.L."/>
            <person name="Yagi K."/>
            <person name="Yamanishi H."/>
            <person name="Zabarovsky E."/>
            <person name="Zhu S."/>
            <person name="Zimmer A."/>
            <person name="Hide W."/>
            <person name="Bult C."/>
            <person name="Grimmond S.M."/>
            <person name="Teasdale R.D."/>
            <person name="Liu E.T."/>
            <person name="Brusic V."/>
            <person name="Quackenbush J."/>
            <person name="Wahlestedt C."/>
            <person name="Mattick J.S."/>
            <person name="Hume D.A."/>
            <person name="Kai C."/>
            <person name="Sasaki D."/>
            <person name="Tomaru Y."/>
            <person name="Fukuda S."/>
            <person name="Kanamori-Katayama M."/>
            <person name="Suzuki M."/>
            <person name="Aoki J."/>
            <person name="Arakawa T."/>
            <person name="Iida J."/>
            <person name="Imamura K."/>
            <person name="Itoh M."/>
            <person name="Kato T."/>
            <person name="Kawaji H."/>
            <person name="Kawagashira N."/>
            <person name="Kawashima T."/>
            <person name="Kojima M."/>
            <person name="Kondo S."/>
            <person name="Konno H."/>
            <person name="Nakano K."/>
            <person name="Ninomiya N."/>
            <person name="Nishio T."/>
            <person name="Okada M."/>
            <person name="Plessy C."/>
            <person name="Shibata K."/>
            <person name="Shiraki T."/>
            <person name="Suzuki S."/>
            <person name="Tagami M."/>
            <person name="Waki K."/>
            <person name="Watahiki A."/>
            <person name="Okamura-Oho Y."/>
            <person name="Suzuki H."/>
            <person name="Kawai J."/>
            <person name="Hayashizaki Y."/>
        </authorList>
    </citation>
    <scope>NUCLEOTIDE SEQUENCE [LARGE SCALE MRNA]</scope>
    <source>
        <strain>C57BL/6J</strain>
        <tissue>Cerebellum</tissue>
    </source>
</reference>
<reference key="2">
    <citation type="submission" date="2005-07" db="EMBL/GenBank/DDBJ databases">
        <authorList>
            <person name="Mural R.J."/>
            <person name="Adams M.D."/>
            <person name="Myers E.W."/>
            <person name="Smith H.O."/>
            <person name="Venter J.C."/>
        </authorList>
    </citation>
    <scope>NUCLEOTIDE SEQUENCE [LARGE SCALE GENOMIC DNA]</scope>
</reference>
<reference key="3">
    <citation type="journal article" date="2004" name="Genome Res.">
        <title>The status, quality, and expansion of the NIH full-length cDNA project: the Mammalian Gene Collection (MGC).</title>
        <authorList>
            <consortium name="The MGC Project Team"/>
        </authorList>
    </citation>
    <scope>NUCLEOTIDE SEQUENCE [LARGE SCALE MRNA]</scope>
    <source>
        <tissue>Brain</tissue>
    </source>
</reference>
<feature type="chain" id="PRO_0000086513" description="Phosphorylase b kinase gamma catalytic chain, liver/testis isoform">
    <location>
        <begin position="1"/>
        <end position="406"/>
    </location>
</feature>
<feature type="domain" description="Protein kinase" evidence="4">
    <location>
        <begin position="24"/>
        <end position="291"/>
    </location>
</feature>
<feature type="region of interest" description="Calmodulin-binding (domain-N)" evidence="1">
    <location>
        <begin position="306"/>
        <end position="330"/>
    </location>
</feature>
<feature type="region of interest" description="Calmodulin-binding (domain-C)" evidence="1">
    <location>
        <begin position="346"/>
        <end position="370"/>
    </location>
</feature>
<feature type="active site" description="Proton acceptor" evidence="4 5">
    <location>
        <position position="153"/>
    </location>
</feature>
<feature type="binding site" evidence="4">
    <location>
        <begin position="30"/>
        <end position="38"/>
    </location>
    <ligand>
        <name>ATP</name>
        <dbReference type="ChEBI" id="CHEBI:30616"/>
    </ligand>
</feature>
<feature type="binding site" evidence="4">
    <location>
        <position position="53"/>
    </location>
    <ligand>
        <name>ATP</name>
        <dbReference type="ChEBI" id="CHEBI:30616"/>
    </ligand>
</feature>
<feature type="sequence conflict" description="In Ref. 1; BAB23926." evidence="6" ref="1">
    <original>R</original>
    <variation>C</variation>
    <location>
        <position position="260"/>
    </location>
</feature>
<organism>
    <name type="scientific">Mus musculus</name>
    <name type="common">Mouse</name>
    <dbReference type="NCBI Taxonomy" id="10090"/>
    <lineage>
        <taxon>Eukaryota</taxon>
        <taxon>Metazoa</taxon>
        <taxon>Chordata</taxon>
        <taxon>Craniata</taxon>
        <taxon>Vertebrata</taxon>
        <taxon>Euteleostomi</taxon>
        <taxon>Mammalia</taxon>
        <taxon>Eutheria</taxon>
        <taxon>Euarchontoglires</taxon>
        <taxon>Glires</taxon>
        <taxon>Rodentia</taxon>
        <taxon>Myomorpha</taxon>
        <taxon>Muroidea</taxon>
        <taxon>Muridae</taxon>
        <taxon>Murinae</taxon>
        <taxon>Mus</taxon>
        <taxon>Mus</taxon>
    </lineage>
</organism>
<accession>Q9DB30</accession>
<accession>A6H632</accession>
<comment type="function">
    <text evidence="3">Catalytic subunit of the phosphorylase b kinase (PHK), which mediates the neural and hormonal regulation of glycogen breakdown (glycogenolysis) by phosphorylating and thereby activating glycogen phosphorylase. May regulate glycogeneolysis in the testis. In vitro, phosphorylates PYGM.</text>
</comment>
<comment type="catalytic activity">
    <reaction evidence="3">
        <text>2 ATP + phosphorylase b = 2 ADP + phosphorylase a.</text>
        <dbReference type="EC" id="2.7.11.19"/>
    </reaction>
</comment>
<comment type="subunit">
    <text evidence="2">Hexadecamer of 4 heterotetramers, each composed of alpha, beta, gamma, and delta subunits. Alpha (PHKA1 or PHKA2) and beta (PHKB) are regulatory subunits, gamma (PHKG1 or PHKG2) is the catalytic subunit, and delta is calmodulin.</text>
</comment>
<comment type="similarity">
    <text evidence="6">Belongs to the protein kinase superfamily. CAMK Ser/Thr protein kinase family.</text>
</comment>
<keyword id="KW-0067">ATP-binding</keyword>
<keyword id="KW-0112">Calmodulin-binding</keyword>
<keyword id="KW-0119">Carbohydrate metabolism</keyword>
<keyword id="KW-0321">Glycogen metabolism</keyword>
<keyword id="KW-0418">Kinase</keyword>
<keyword id="KW-0547">Nucleotide-binding</keyword>
<keyword id="KW-1185">Reference proteome</keyword>
<keyword id="KW-0723">Serine/threonine-protein kinase</keyword>
<keyword id="KW-0808">Transferase</keyword>